<protein>
    <recommendedName>
        <fullName evidence="1">Pyridoxal 5'-phosphate synthase subunit PdxS</fullName>
        <shortName evidence="1">PLP synthase subunit PdxS</shortName>
        <ecNumber evidence="1">4.3.3.6</ecNumber>
    </recommendedName>
    <alternativeName>
        <fullName evidence="1">Pdx1</fullName>
    </alternativeName>
</protein>
<sequence>MKKLGTDLLKRGFAKMVKHGVVMDVTNVEQAQIAEDAGAAAVMALERVPADIRVQGGVARMSDPEMILEIKDAVSIPVMAKARIGHFVEAQVLESIGVDMVDESEVLTPADEVNHIDKRAFTAPFVCGARNLGEALRRIDEGAAMIRTKGEAGTGNVVEAVKHMRAVNEGIARVVGYKEMGLEAELIQMARNELKVPMELISEVAELKRLPVVNFAAGGIATPADAALMMQMGCDGVFVGSGIFKSGNPATRAKAIVEATYNFDKPDVIGEVSKNLGEAMVGINIDEIPEEKLLAKRGI</sequence>
<feature type="chain" id="PRO_1000070385" description="Pyridoxal 5'-phosphate synthase subunit PdxS">
    <location>
        <begin position="1"/>
        <end position="299"/>
    </location>
</feature>
<feature type="active site" description="Schiff-base intermediate with D-ribose 5-phosphate" evidence="1">
    <location>
        <position position="81"/>
    </location>
</feature>
<feature type="binding site" evidence="1">
    <location>
        <position position="24"/>
    </location>
    <ligand>
        <name>D-ribose 5-phosphate</name>
        <dbReference type="ChEBI" id="CHEBI:78346"/>
    </ligand>
</feature>
<feature type="binding site" evidence="1">
    <location>
        <position position="153"/>
    </location>
    <ligand>
        <name>D-ribose 5-phosphate</name>
        <dbReference type="ChEBI" id="CHEBI:78346"/>
    </ligand>
</feature>
<feature type="binding site" evidence="1">
    <location>
        <position position="165"/>
    </location>
    <ligand>
        <name>D-glyceraldehyde 3-phosphate</name>
        <dbReference type="ChEBI" id="CHEBI:59776"/>
    </ligand>
</feature>
<feature type="binding site" evidence="1">
    <location>
        <position position="219"/>
    </location>
    <ligand>
        <name>D-ribose 5-phosphate</name>
        <dbReference type="ChEBI" id="CHEBI:78346"/>
    </ligand>
</feature>
<feature type="binding site" evidence="1">
    <location>
        <begin position="240"/>
        <end position="241"/>
    </location>
    <ligand>
        <name>D-ribose 5-phosphate</name>
        <dbReference type="ChEBI" id="CHEBI:78346"/>
    </ligand>
</feature>
<accession>A6VI92</accession>
<dbReference type="EC" id="4.3.3.6" evidence="1"/>
<dbReference type="EMBL" id="CP000745">
    <property type="protein sequence ID" value="ABR66168.1"/>
    <property type="molecule type" value="Genomic_DNA"/>
</dbReference>
<dbReference type="SMR" id="A6VI92"/>
<dbReference type="STRING" id="426368.MmarC7_1102"/>
<dbReference type="KEGG" id="mmz:MmarC7_1102"/>
<dbReference type="eggNOG" id="arCOG04075">
    <property type="taxonomic scope" value="Archaea"/>
</dbReference>
<dbReference type="HOGENOM" id="CLU_055352_1_0_2"/>
<dbReference type="OrthoDB" id="6840at2157"/>
<dbReference type="UniPathway" id="UPA00245"/>
<dbReference type="GO" id="GO:0036381">
    <property type="term" value="F:pyridoxal 5'-phosphate synthase (glutamine hydrolysing) activity"/>
    <property type="evidence" value="ECO:0007669"/>
    <property type="project" value="UniProtKB-UniRule"/>
</dbReference>
<dbReference type="GO" id="GO:0006520">
    <property type="term" value="P:amino acid metabolic process"/>
    <property type="evidence" value="ECO:0007669"/>
    <property type="project" value="TreeGrafter"/>
</dbReference>
<dbReference type="GO" id="GO:0042823">
    <property type="term" value="P:pyridoxal phosphate biosynthetic process"/>
    <property type="evidence" value="ECO:0007669"/>
    <property type="project" value="UniProtKB-UniRule"/>
</dbReference>
<dbReference type="GO" id="GO:0008615">
    <property type="term" value="P:pyridoxine biosynthetic process"/>
    <property type="evidence" value="ECO:0007669"/>
    <property type="project" value="TreeGrafter"/>
</dbReference>
<dbReference type="CDD" id="cd04727">
    <property type="entry name" value="pdxS"/>
    <property type="match status" value="1"/>
</dbReference>
<dbReference type="FunFam" id="3.20.20.70:FF:000001">
    <property type="entry name" value="Pyridoxine biosynthesis protein PDX1"/>
    <property type="match status" value="1"/>
</dbReference>
<dbReference type="Gene3D" id="3.20.20.70">
    <property type="entry name" value="Aldolase class I"/>
    <property type="match status" value="1"/>
</dbReference>
<dbReference type="HAMAP" id="MF_01824">
    <property type="entry name" value="PdxS"/>
    <property type="match status" value="1"/>
</dbReference>
<dbReference type="InterPro" id="IPR013785">
    <property type="entry name" value="Aldolase_TIM"/>
</dbReference>
<dbReference type="InterPro" id="IPR001852">
    <property type="entry name" value="PdxS/SNZ"/>
</dbReference>
<dbReference type="InterPro" id="IPR033755">
    <property type="entry name" value="PdxS/SNZ_N"/>
</dbReference>
<dbReference type="InterPro" id="IPR011060">
    <property type="entry name" value="RibuloseP-bd_barrel"/>
</dbReference>
<dbReference type="NCBIfam" id="NF003215">
    <property type="entry name" value="PRK04180.1"/>
    <property type="match status" value="1"/>
</dbReference>
<dbReference type="NCBIfam" id="TIGR00343">
    <property type="entry name" value="pyridoxal 5'-phosphate synthase lyase subunit PdxS"/>
    <property type="match status" value="1"/>
</dbReference>
<dbReference type="PANTHER" id="PTHR31829">
    <property type="entry name" value="PYRIDOXAL 5'-PHOSPHATE SYNTHASE SUBUNIT SNZ1-RELATED"/>
    <property type="match status" value="1"/>
</dbReference>
<dbReference type="PANTHER" id="PTHR31829:SF0">
    <property type="entry name" value="PYRIDOXAL 5'-PHOSPHATE SYNTHASE SUBUNIT SNZ1-RELATED"/>
    <property type="match status" value="1"/>
</dbReference>
<dbReference type="Pfam" id="PF01680">
    <property type="entry name" value="SOR_SNZ"/>
    <property type="match status" value="1"/>
</dbReference>
<dbReference type="PIRSF" id="PIRSF029271">
    <property type="entry name" value="Pdx1"/>
    <property type="match status" value="1"/>
</dbReference>
<dbReference type="SUPFAM" id="SSF51366">
    <property type="entry name" value="Ribulose-phoshate binding barrel"/>
    <property type="match status" value="1"/>
</dbReference>
<dbReference type="PROSITE" id="PS01235">
    <property type="entry name" value="PDXS_SNZ_1"/>
    <property type="match status" value="1"/>
</dbReference>
<dbReference type="PROSITE" id="PS51129">
    <property type="entry name" value="PDXS_SNZ_2"/>
    <property type="match status" value="1"/>
</dbReference>
<organism>
    <name type="scientific">Methanococcus maripaludis (strain C7 / ATCC BAA-1331)</name>
    <dbReference type="NCBI Taxonomy" id="426368"/>
    <lineage>
        <taxon>Archaea</taxon>
        <taxon>Methanobacteriati</taxon>
        <taxon>Methanobacteriota</taxon>
        <taxon>Methanomada group</taxon>
        <taxon>Methanococci</taxon>
        <taxon>Methanococcales</taxon>
        <taxon>Methanococcaceae</taxon>
        <taxon>Methanococcus</taxon>
    </lineage>
</organism>
<gene>
    <name evidence="1" type="primary">pdxS</name>
    <name type="ordered locus">MmarC7_1102</name>
</gene>
<proteinExistence type="inferred from homology"/>
<name>PDXS_METM7</name>
<comment type="function">
    <text evidence="1">Catalyzes the formation of pyridoxal 5'-phosphate from ribose 5-phosphate (RBP), glyceraldehyde 3-phosphate (G3P) and ammonia. The ammonia is provided by the PdxT subunit. Can also use ribulose 5-phosphate and dihydroxyacetone phosphate as substrates, resulting from enzyme-catalyzed isomerization of RBP and G3P, respectively.</text>
</comment>
<comment type="catalytic activity">
    <reaction evidence="1">
        <text>aldehydo-D-ribose 5-phosphate + D-glyceraldehyde 3-phosphate + L-glutamine = pyridoxal 5'-phosphate + L-glutamate + phosphate + 3 H2O + H(+)</text>
        <dbReference type="Rhea" id="RHEA:31507"/>
        <dbReference type="ChEBI" id="CHEBI:15377"/>
        <dbReference type="ChEBI" id="CHEBI:15378"/>
        <dbReference type="ChEBI" id="CHEBI:29985"/>
        <dbReference type="ChEBI" id="CHEBI:43474"/>
        <dbReference type="ChEBI" id="CHEBI:58273"/>
        <dbReference type="ChEBI" id="CHEBI:58359"/>
        <dbReference type="ChEBI" id="CHEBI:59776"/>
        <dbReference type="ChEBI" id="CHEBI:597326"/>
        <dbReference type="EC" id="4.3.3.6"/>
    </reaction>
</comment>
<comment type="pathway">
    <text evidence="1">Cofactor biosynthesis; pyridoxal 5'-phosphate biosynthesis.</text>
</comment>
<comment type="subunit">
    <text evidence="1">In the presence of PdxT, forms a dodecamer of heterodimers.</text>
</comment>
<comment type="similarity">
    <text evidence="1">Belongs to the PdxS/SNZ family.</text>
</comment>
<reference key="1">
    <citation type="submission" date="2007-06" db="EMBL/GenBank/DDBJ databases">
        <title>Complete sequence of Methanococcus maripaludis C7.</title>
        <authorList>
            <consortium name="US DOE Joint Genome Institute"/>
            <person name="Copeland A."/>
            <person name="Lucas S."/>
            <person name="Lapidus A."/>
            <person name="Barry K."/>
            <person name="Glavina del Rio T."/>
            <person name="Dalin E."/>
            <person name="Tice H."/>
            <person name="Pitluck S."/>
            <person name="Clum A."/>
            <person name="Schmutz J."/>
            <person name="Larimer F."/>
            <person name="Land M."/>
            <person name="Hauser L."/>
            <person name="Kyrpides N."/>
            <person name="Anderson I."/>
            <person name="Sieprawska-Lupa M."/>
            <person name="Whitman W.B."/>
            <person name="Richardson P."/>
        </authorList>
    </citation>
    <scope>NUCLEOTIDE SEQUENCE [LARGE SCALE GENOMIC DNA]</scope>
    <source>
        <strain>C7 / ATCC BAA-1331</strain>
    </source>
</reference>
<evidence type="ECO:0000255" key="1">
    <source>
        <dbReference type="HAMAP-Rule" id="MF_01824"/>
    </source>
</evidence>
<keyword id="KW-0456">Lyase</keyword>
<keyword id="KW-0663">Pyridoxal phosphate</keyword>
<keyword id="KW-0704">Schiff base</keyword>